<comment type="function">
    <text evidence="1 2">Has strong antibacterial activity and biofilm inhibition effects against Gram-positive and -negative bacteria including E.coli, S.epidermidis, and A.baumannii and oxacillin-resistant S.aureus and meropenem-resistant P.aeruginosa (PubMed:27128941, PubMed:34506798). Is not cytotoxic against human foreskin fibroblast Hs27 or hemolytic against mammalian red blood cells (PubMed:27128941, PubMed:34506798). Its mechanism of action involves binding to lipoteichoic acid and lipopolysaccharide of Gram-positive and Gram-negative bacterial membranes, respectively, to destroy the bacterial membrane (PubMed:34506798). In addition, it shows anti-inflammatory effects by inhibiting the expression of pro-inflammatory cytokines that are increased during bacterial infection in Hs27 cells (PubMed:34506798).</text>
</comment>
<comment type="subcellular location">
    <subcellularLocation>
        <location evidence="1">Secreted</location>
    </subcellularLocation>
    <subcellularLocation>
        <location evidence="5">Target cell membrane</location>
    </subcellularLocation>
</comment>
<comment type="tissue specificity">
    <text evidence="1">Expressed by the venom gland.</text>
</comment>
<comment type="mass spectrometry"/>
<comment type="similarity">
    <text evidence="5">Belongs to the cationic peptide 04 (cupiennin) family. 05 subfamily.</text>
</comment>
<feature type="peptide" id="PRO_0000455435" description="Lycosin-II" evidence="1">
    <location>
        <begin position="1"/>
        <end position="21"/>
    </location>
</feature>
<feature type="modified residue" description="Leucine amide" evidence="6">
    <location>
        <position position="21"/>
    </location>
</feature>
<sequence>VWLSALKFIGKHLAKHQLSKLGR</sequence>
<reference key="1">
    <citation type="journal article" date="2016" name="Toxins">
        <title>The spider venom peptide Lycosin-II has potent antimicrobial activity against clinically isolated bacteria.</title>
        <authorList>
            <person name="Wang Y."/>
            <person name="Wang L."/>
            <person name="Yang H."/>
            <person name="Xiao H."/>
            <person name="Farooq A."/>
            <person name="Liu Z."/>
            <person name="Hu M."/>
            <person name="Shi X."/>
        </authorList>
    </citation>
    <scope>NUCLEOTIDE SEQUENCE [MRNA]</scope>
    <scope>PROTEIN SEQUENCE OF 1-22</scope>
    <scope>FUNCTION</scope>
    <scope>MASS SPECTROMETRY</scope>
    <scope>SUBCELLULAR LOCATION</scope>
    <scope>SYNTHESIS OF 1-22</scope>
    <scope>PROBABLE AMIDATION AT LEU-21</scope>
    <source>
        <tissue>Venom</tissue>
    </source>
</reference>
<reference key="2">
    <citation type="journal article" date="2022" name="Biochim. Biophys. Acta">
        <title>Anti-biofilm and anti-inflammatory effects of Lycosin-II isolated from spiders against multi-drug resistant bacteria.</title>
        <authorList>
            <person name="Oh J.H."/>
            <person name="Park J."/>
            <person name="Park Y."/>
        </authorList>
    </citation>
    <scope>SYNTHESIS OF 1-22</scope>
    <scope>FUNCTION</scope>
</reference>
<evidence type="ECO:0000269" key="1">
    <source>
    </source>
</evidence>
<evidence type="ECO:0000269" key="2">
    <source>
    </source>
</evidence>
<evidence type="ECO:0000303" key="3">
    <source>
    </source>
</evidence>
<evidence type="ECO:0000303" key="4">
    <source>
    </source>
</evidence>
<evidence type="ECO:0000305" key="5"/>
<evidence type="ECO:0000305" key="6">
    <source>
    </source>
</evidence>
<protein>
    <recommendedName>
        <fullName evidence="3 4">Lycosin-II</fullName>
    </recommendedName>
</protein>
<organism>
    <name type="scientific">Lycosa singoriensis</name>
    <name type="common">Wolf spider</name>
    <name type="synonym">Aranea singoriensis</name>
    <dbReference type="NCBI Taxonomy" id="434756"/>
    <lineage>
        <taxon>Eukaryota</taxon>
        <taxon>Metazoa</taxon>
        <taxon>Ecdysozoa</taxon>
        <taxon>Arthropoda</taxon>
        <taxon>Chelicerata</taxon>
        <taxon>Arachnida</taxon>
        <taxon>Araneae</taxon>
        <taxon>Araneomorphae</taxon>
        <taxon>Entelegynae</taxon>
        <taxon>Lycosoidea</taxon>
        <taxon>Lycosidae</taxon>
        <taxon>Lycosa</taxon>
    </lineage>
</organism>
<dbReference type="GO" id="GO:0005576">
    <property type="term" value="C:extracellular region"/>
    <property type="evidence" value="ECO:0007669"/>
    <property type="project" value="UniProtKB-SubCell"/>
</dbReference>
<dbReference type="GO" id="GO:0016020">
    <property type="term" value="C:membrane"/>
    <property type="evidence" value="ECO:0007669"/>
    <property type="project" value="UniProtKB-KW"/>
</dbReference>
<dbReference type="GO" id="GO:0044218">
    <property type="term" value="C:other organism cell membrane"/>
    <property type="evidence" value="ECO:0007669"/>
    <property type="project" value="UniProtKB-KW"/>
</dbReference>
<dbReference type="GO" id="GO:0042742">
    <property type="term" value="P:defense response to bacterium"/>
    <property type="evidence" value="ECO:0007669"/>
    <property type="project" value="UniProtKB-KW"/>
</dbReference>
<accession>P0DV71</accession>
<keyword id="KW-0027">Amidation</keyword>
<keyword id="KW-0044">Antibiotic</keyword>
<keyword id="KW-0929">Antimicrobial</keyword>
<keyword id="KW-0903">Direct protein sequencing</keyword>
<keyword id="KW-0472">Membrane</keyword>
<keyword id="KW-0964">Secreted</keyword>
<keyword id="KW-1052">Target cell membrane</keyword>
<keyword id="KW-1053">Target membrane</keyword>
<name>LYS2_LYCSI</name>
<proteinExistence type="evidence at protein level"/>